<gene>
    <name type="primary">Ntf4</name>
    <name type="synonym">Nt4</name>
    <name type="synonym">Ntf5</name>
</gene>
<feature type="signal peptide" evidence="4">
    <location>
        <begin position="1"/>
        <end position="21"/>
    </location>
</feature>
<feature type="propeptide" id="PRO_0000019673">
    <location>
        <begin position="22"/>
        <end position="79"/>
    </location>
</feature>
<feature type="chain" id="PRO_0000019674" description="Neurotrophin-4">
    <location>
        <begin position="80"/>
        <end position="209"/>
    </location>
</feature>
<feature type="glycosylation site" description="N-linked (GlcNAc...) asparagine" evidence="4">
    <location>
        <position position="75"/>
    </location>
</feature>
<feature type="disulfide bond" evidence="1">
    <location>
        <begin position="96"/>
        <end position="169"/>
    </location>
</feature>
<feature type="disulfide bond" evidence="1">
    <location>
        <begin position="140"/>
        <end position="198"/>
    </location>
</feature>
<feature type="disulfide bond" evidence="1">
    <location>
        <begin position="157"/>
        <end position="200"/>
    </location>
</feature>
<feature type="sequence conflict" description="In Ref. 2; AAB20548." evidence="6" ref="2">
    <original>R</original>
    <variation>P</variation>
    <location>
        <position position="177"/>
    </location>
</feature>
<evidence type="ECO:0000250" key="1"/>
<evidence type="ECO:0000250" key="2">
    <source>
        <dbReference type="UniProtKB" id="P34130"/>
    </source>
</evidence>
<evidence type="ECO:0000250" key="3">
    <source>
        <dbReference type="UniProtKB" id="Q80VU4"/>
    </source>
</evidence>
<evidence type="ECO:0000255" key="4"/>
<evidence type="ECO:0000269" key="5">
    <source>
    </source>
</evidence>
<evidence type="ECO:0000305" key="6"/>
<name>NTF4_RAT</name>
<comment type="function">
    <text evidence="2 3">Target-derived survival factor for peripheral sensory sympathetic neurons (By similarity). May promote ameloblast differentiation and subsequent reduction in proliferation of ameloblasts (By similarity).</text>
</comment>
<comment type="subcellular location">
    <subcellularLocation>
        <location evidence="2">Secreted</location>
    </subcellularLocation>
</comment>
<comment type="tissue specificity">
    <text evidence="5">Expressed in thymus, muscle, ovary, brain, heart, stomach and kidney. Expressed in both embryo and adult tissues.</text>
</comment>
<comment type="similarity">
    <text evidence="6">Belongs to the NGF-beta family.</text>
</comment>
<dbReference type="EMBL" id="S69323">
    <property type="protein sequence ID" value="AAB20548.1"/>
    <property type="molecule type" value="mRNA"/>
</dbReference>
<dbReference type="EMBL" id="M86742">
    <property type="protein sequence ID" value="AAA41728.1"/>
    <property type="molecule type" value="Genomic_DNA"/>
</dbReference>
<dbReference type="PIR" id="B42687">
    <property type="entry name" value="B42687"/>
</dbReference>
<dbReference type="RefSeq" id="NP_037316.2">
    <property type="nucleotide sequence ID" value="NM_013184.3"/>
</dbReference>
<dbReference type="RefSeq" id="XP_038958178.1">
    <property type="nucleotide sequence ID" value="XM_039102250.2"/>
</dbReference>
<dbReference type="SMR" id="P34131"/>
<dbReference type="FunCoup" id="P34131">
    <property type="interactions" value="375"/>
</dbReference>
<dbReference type="STRING" id="10116.ENSRNOP00000028195"/>
<dbReference type="GlyCosmos" id="P34131">
    <property type="glycosylation" value="1 site, No reported glycans"/>
</dbReference>
<dbReference type="GlyGen" id="P34131">
    <property type="glycosylation" value="1 site"/>
</dbReference>
<dbReference type="PhosphoSitePlus" id="P34131"/>
<dbReference type="PaxDb" id="10116-ENSRNOP00000028195"/>
<dbReference type="Ensembl" id="ENSRNOT00000028194.3">
    <property type="protein sequence ID" value="ENSRNOP00000028195.1"/>
    <property type="gene ID" value="ENSRNOG00000020783.3"/>
</dbReference>
<dbReference type="Ensembl" id="ENSRNOT00000095694.1">
    <property type="protein sequence ID" value="ENSRNOP00000093109.1"/>
    <property type="gene ID" value="ENSRNOG00000020783.3"/>
</dbReference>
<dbReference type="GeneID" id="25730"/>
<dbReference type="KEGG" id="rno:25730"/>
<dbReference type="UCSC" id="RGD:3212">
    <property type="organism name" value="rat"/>
</dbReference>
<dbReference type="AGR" id="RGD:3212"/>
<dbReference type="CTD" id="4909"/>
<dbReference type="RGD" id="3212">
    <property type="gene designation" value="Ntf4"/>
</dbReference>
<dbReference type="eggNOG" id="ENOG502R4FK">
    <property type="taxonomic scope" value="Eukaryota"/>
</dbReference>
<dbReference type="GeneTree" id="ENSGT00390000007725"/>
<dbReference type="HOGENOM" id="CLU_059942_2_1_1"/>
<dbReference type="InParanoid" id="P34131"/>
<dbReference type="OMA" id="WNLYSPR"/>
<dbReference type="OrthoDB" id="6491780at2759"/>
<dbReference type="PhylomeDB" id="P34131"/>
<dbReference type="TreeFam" id="TF106463"/>
<dbReference type="Reactome" id="R-RNO-1257604">
    <property type="pathway name" value="PIP3 activates AKT signaling"/>
</dbReference>
<dbReference type="Reactome" id="R-RNO-6811558">
    <property type="pathway name" value="PI5P, PP2A and IER3 Regulate PI3K/AKT Signaling"/>
</dbReference>
<dbReference type="Reactome" id="R-RNO-9026527">
    <property type="pathway name" value="Activated NTRK2 signals through PLCG1"/>
</dbReference>
<dbReference type="Reactome" id="R-RNO-9028731">
    <property type="pathway name" value="Activated NTRK2 signals through FRS2 and FRS3"/>
</dbReference>
<dbReference type="PRO" id="PR:P34131"/>
<dbReference type="Proteomes" id="UP000002494">
    <property type="component" value="Chromosome 1"/>
</dbReference>
<dbReference type="Bgee" id="ENSRNOG00000020783">
    <property type="expression patterns" value="Expressed in quadriceps femoris and 11 other cell types or tissues"/>
</dbReference>
<dbReference type="GO" id="GO:0030424">
    <property type="term" value="C:axon"/>
    <property type="evidence" value="ECO:0000318"/>
    <property type="project" value="GO_Central"/>
</dbReference>
<dbReference type="GO" id="GO:0030425">
    <property type="term" value="C:dendrite"/>
    <property type="evidence" value="ECO:0000318"/>
    <property type="project" value="GO_Central"/>
</dbReference>
<dbReference type="GO" id="GO:0005576">
    <property type="term" value="C:extracellular region"/>
    <property type="evidence" value="ECO:0000304"/>
    <property type="project" value="Reactome"/>
</dbReference>
<dbReference type="GO" id="GO:0005615">
    <property type="term" value="C:extracellular space"/>
    <property type="evidence" value="ECO:0000318"/>
    <property type="project" value="GO_Central"/>
</dbReference>
<dbReference type="GO" id="GO:0008021">
    <property type="term" value="C:synaptic vesicle"/>
    <property type="evidence" value="ECO:0000318"/>
    <property type="project" value="GO_Central"/>
</dbReference>
<dbReference type="GO" id="GO:0008083">
    <property type="term" value="F:growth factor activity"/>
    <property type="evidence" value="ECO:0000318"/>
    <property type="project" value="GO_Central"/>
</dbReference>
<dbReference type="GO" id="GO:0005163">
    <property type="term" value="F:nerve growth factor receptor binding"/>
    <property type="evidence" value="ECO:0000318"/>
    <property type="project" value="GO_Central"/>
</dbReference>
<dbReference type="GO" id="GO:0008344">
    <property type="term" value="P:adult locomotory behavior"/>
    <property type="evidence" value="ECO:0000250"/>
    <property type="project" value="UniProtKB"/>
</dbReference>
<dbReference type="GO" id="GO:0036305">
    <property type="term" value="P:ameloblast differentiation"/>
    <property type="evidence" value="ECO:0000250"/>
    <property type="project" value="UniProtKB"/>
</dbReference>
<dbReference type="GO" id="GO:0007169">
    <property type="term" value="P:cell surface receptor protein tyrosine kinase signaling pathway"/>
    <property type="evidence" value="ECO:0000318"/>
    <property type="project" value="GO_Central"/>
</dbReference>
<dbReference type="GO" id="GO:0008544">
    <property type="term" value="P:epidermis development"/>
    <property type="evidence" value="ECO:0000250"/>
    <property type="project" value="UniProtKB"/>
</dbReference>
<dbReference type="GO" id="GO:0007402">
    <property type="term" value="P:ganglion mother cell fate determination"/>
    <property type="evidence" value="ECO:0000250"/>
    <property type="project" value="UniProtKB"/>
</dbReference>
<dbReference type="GO" id="GO:0060384">
    <property type="term" value="P:innervation"/>
    <property type="evidence" value="ECO:0000266"/>
    <property type="project" value="RGD"/>
</dbReference>
<dbReference type="GO" id="GO:0007616">
    <property type="term" value="P:long-term memory"/>
    <property type="evidence" value="ECO:0000250"/>
    <property type="project" value="UniProtKB"/>
</dbReference>
<dbReference type="GO" id="GO:0042490">
    <property type="term" value="P:mechanoreceptor differentiation"/>
    <property type="evidence" value="ECO:0000266"/>
    <property type="project" value="RGD"/>
</dbReference>
<dbReference type="GO" id="GO:0050804">
    <property type="term" value="P:modulation of chemical synaptic transmission"/>
    <property type="evidence" value="ECO:0000318"/>
    <property type="project" value="GO_Central"/>
</dbReference>
<dbReference type="GO" id="GO:0043524">
    <property type="term" value="P:negative regulation of neuron apoptotic process"/>
    <property type="evidence" value="ECO:0000318"/>
    <property type="project" value="GO_Central"/>
</dbReference>
<dbReference type="GO" id="GO:0043069">
    <property type="term" value="P:negative regulation of programmed cell death"/>
    <property type="evidence" value="ECO:0000266"/>
    <property type="project" value="RGD"/>
</dbReference>
<dbReference type="GO" id="GO:0021675">
    <property type="term" value="P:nerve development"/>
    <property type="evidence" value="ECO:0000318"/>
    <property type="project" value="GO_Central"/>
</dbReference>
<dbReference type="GO" id="GO:0038180">
    <property type="term" value="P:nerve growth factor signaling pathway"/>
    <property type="evidence" value="ECO:0000318"/>
    <property type="project" value="GO_Central"/>
</dbReference>
<dbReference type="GO" id="GO:0048812">
    <property type="term" value="P:neuron projection morphogenesis"/>
    <property type="evidence" value="ECO:0000318"/>
    <property type="project" value="GO_Central"/>
</dbReference>
<dbReference type="GO" id="GO:0048167">
    <property type="term" value="P:regulation of synaptic plasticity"/>
    <property type="evidence" value="ECO:0000303"/>
    <property type="project" value="RGD"/>
</dbReference>
<dbReference type="GO" id="GO:0008052">
    <property type="term" value="P:sensory organ boundary specification"/>
    <property type="evidence" value="ECO:0000250"/>
    <property type="project" value="UniProtKB"/>
</dbReference>
<dbReference type="GO" id="GO:0061193">
    <property type="term" value="P:taste bud development"/>
    <property type="evidence" value="ECO:0000266"/>
    <property type="project" value="RGD"/>
</dbReference>
<dbReference type="FunFam" id="2.10.90.10:FF:000002">
    <property type="entry name" value="Brain-derived neurotrophic factor"/>
    <property type="match status" value="1"/>
</dbReference>
<dbReference type="Gene3D" id="2.10.90.10">
    <property type="entry name" value="Cystine-knot cytokines"/>
    <property type="match status" value="1"/>
</dbReference>
<dbReference type="InterPro" id="IPR029034">
    <property type="entry name" value="Cystine-knot_cytokine"/>
</dbReference>
<dbReference type="InterPro" id="IPR020408">
    <property type="entry name" value="Nerve_growth_factor-like"/>
</dbReference>
<dbReference type="InterPro" id="IPR002072">
    <property type="entry name" value="Nerve_growth_factor-rel"/>
</dbReference>
<dbReference type="InterPro" id="IPR019846">
    <property type="entry name" value="Nerve_growth_factor_CS"/>
</dbReference>
<dbReference type="InterPro" id="IPR020432">
    <property type="entry name" value="Neurotrophin-4"/>
</dbReference>
<dbReference type="PANTHER" id="PTHR11589">
    <property type="entry name" value="NERVE GROWTH FACTOR NGF -RELATED"/>
    <property type="match status" value="1"/>
</dbReference>
<dbReference type="PANTHER" id="PTHR11589:SF8">
    <property type="entry name" value="NEUROTROPHIN-4"/>
    <property type="match status" value="1"/>
</dbReference>
<dbReference type="Pfam" id="PF00243">
    <property type="entry name" value="NGF"/>
    <property type="match status" value="1"/>
</dbReference>
<dbReference type="PIRSF" id="PIRSF001789">
    <property type="entry name" value="NGF"/>
    <property type="match status" value="1"/>
</dbReference>
<dbReference type="PRINTS" id="PR01915">
    <property type="entry name" value="NEUROTROPHN4"/>
</dbReference>
<dbReference type="PRINTS" id="PR00268">
    <property type="entry name" value="NGF"/>
</dbReference>
<dbReference type="SMART" id="SM00140">
    <property type="entry name" value="NGF"/>
    <property type="match status" value="1"/>
</dbReference>
<dbReference type="SUPFAM" id="SSF57501">
    <property type="entry name" value="Cystine-knot cytokines"/>
    <property type="match status" value="1"/>
</dbReference>
<dbReference type="PROSITE" id="PS00248">
    <property type="entry name" value="NGF_1"/>
    <property type="match status" value="1"/>
</dbReference>
<dbReference type="PROSITE" id="PS50270">
    <property type="entry name" value="NGF_2"/>
    <property type="match status" value="1"/>
</dbReference>
<organism>
    <name type="scientific">Rattus norvegicus</name>
    <name type="common">Rat</name>
    <dbReference type="NCBI Taxonomy" id="10116"/>
    <lineage>
        <taxon>Eukaryota</taxon>
        <taxon>Metazoa</taxon>
        <taxon>Chordata</taxon>
        <taxon>Craniata</taxon>
        <taxon>Vertebrata</taxon>
        <taxon>Euteleostomi</taxon>
        <taxon>Mammalia</taxon>
        <taxon>Eutheria</taxon>
        <taxon>Euarchontoglires</taxon>
        <taxon>Glires</taxon>
        <taxon>Rodentia</taxon>
        <taxon>Myomorpha</taxon>
        <taxon>Muroidea</taxon>
        <taxon>Muridae</taxon>
        <taxon>Murinae</taxon>
        <taxon>Rattus</taxon>
    </lineage>
</organism>
<reference key="1">
    <citation type="journal article" date="1991" name="Neuron">
        <title>Neurotrophin-5: a novel neurotrophic factor that activates trk and trkB.</title>
        <authorList>
            <person name="Berkemeier L.R."/>
            <person name="Winslow J.W."/>
            <person name="Kaplan D.R."/>
            <person name="Nikolics K."/>
            <person name="Goeddel D.V."/>
            <person name="Rosenthal A."/>
        </authorList>
    </citation>
    <scope>NUCLEOTIDE SEQUENCE [MRNA]</scope>
    <scope>TISSUE SPECIFICITY</scope>
</reference>
<reference key="2">
    <citation type="journal article" date="1992" name="Proc. Natl. Acad. Sci. U.S.A.">
        <title>Mammalian neurotrophin-4: structure, chromosomal localization, tissue distribution, and receptor specificity.</title>
        <authorList>
            <person name="Ip N.Y."/>
            <person name="Ibanez C.F."/>
            <person name="Nye S.H."/>
            <person name="McClain J."/>
            <person name="Jones P.F."/>
            <person name="Gies D.R."/>
            <person name="Belluscio L."/>
            <person name="le Beau M.M."/>
            <person name="Espinosa R. III"/>
            <person name="Squinto S.P."/>
            <person name="Persson H."/>
            <person name="Yancopoulos G.D."/>
        </authorList>
    </citation>
    <scope>NUCLEOTIDE SEQUENCE [GENOMIC DNA]</scope>
</reference>
<keyword id="KW-0165">Cleavage on pair of basic residues</keyword>
<keyword id="KW-1015">Disulfide bond</keyword>
<keyword id="KW-0325">Glycoprotein</keyword>
<keyword id="KW-0339">Growth factor</keyword>
<keyword id="KW-1185">Reference proteome</keyword>
<keyword id="KW-0964">Secreted</keyword>
<keyword id="KW-0732">Signal</keyword>
<protein>
    <recommendedName>
        <fullName>Neurotrophin-4</fullName>
        <shortName>NT-4</shortName>
    </recommendedName>
    <alternativeName>
        <fullName>Neurotrophin-5</fullName>
        <shortName>NT-5</shortName>
    </alternativeName>
    <alternativeName>
        <fullName>Neutrophic factor 4</fullName>
    </alternativeName>
</protein>
<sequence>MLPRHSCSLLLFLLLLPSVPMEPQPPSSTLPPFLAPEWDLLSPRVALSRGTPAGPPLLFLLEAGAYGEPAGAPANRSRRGVSETAPASRRGELAVCDAVSGWVTDRRTAVDLRGREVEVLGEVPAAGGSPLRQYFFETRCKAESAGEGGPGVGGGGCRGVDRRHWLSECKAKQSYVRALTADSQGRVGWRWIRIDTACVCTLLSRTGRA</sequence>
<accession>P34131</accession>
<proteinExistence type="evidence at transcript level"/>